<keyword id="KW-0227">DNA damage</keyword>
<keyword id="KW-0233">DNA recombination</keyword>
<keyword id="KW-0234">DNA repair</keyword>
<keyword id="KW-0479">Metal-binding</keyword>
<keyword id="KW-0862">Zinc</keyword>
<keyword id="KW-0863">Zinc-finger</keyword>
<feature type="chain" id="PRO_1000195375" description="Recombination protein RecR">
    <location>
        <begin position="1"/>
        <end position="198"/>
    </location>
</feature>
<feature type="domain" description="Toprim" evidence="1">
    <location>
        <begin position="81"/>
        <end position="175"/>
    </location>
</feature>
<feature type="zinc finger region" description="C4-type" evidence="1">
    <location>
        <begin position="58"/>
        <end position="73"/>
    </location>
</feature>
<reference key="1">
    <citation type="submission" date="2005-09" db="EMBL/GenBank/DDBJ databases">
        <title>Complete genome sequence of Clostridium kluyveri and comparative genomics of Clostridia species.</title>
        <authorList>
            <person name="Inui M."/>
            <person name="Nonaka H."/>
            <person name="Shinoda Y."/>
            <person name="Ikenaga Y."/>
            <person name="Abe M."/>
            <person name="Naito K."/>
            <person name="Vertes A.A."/>
            <person name="Yukawa H."/>
        </authorList>
    </citation>
    <scope>NUCLEOTIDE SEQUENCE [LARGE SCALE GENOMIC DNA]</scope>
    <source>
        <strain>NBRC 12016</strain>
    </source>
</reference>
<accession>B9DXI6</accession>
<protein>
    <recommendedName>
        <fullName evidence="1">Recombination protein RecR</fullName>
    </recommendedName>
</protein>
<proteinExistence type="inferred from homology"/>
<name>RECR_CLOK1</name>
<organism>
    <name type="scientific">Clostridium kluyveri (strain NBRC 12016)</name>
    <dbReference type="NCBI Taxonomy" id="583346"/>
    <lineage>
        <taxon>Bacteria</taxon>
        <taxon>Bacillati</taxon>
        <taxon>Bacillota</taxon>
        <taxon>Clostridia</taxon>
        <taxon>Eubacteriales</taxon>
        <taxon>Clostridiaceae</taxon>
        <taxon>Clostridium</taxon>
    </lineage>
</organism>
<comment type="function">
    <text evidence="1">May play a role in DNA repair. It seems to be involved in an RecBC-independent recombinational process of DNA repair. It may act with RecF and RecO.</text>
</comment>
<comment type="similarity">
    <text evidence="1">Belongs to the RecR family.</text>
</comment>
<evidence type="ECO:0000255" key="1">
    <source>
        <dbReference type="HAMAP-Rule" id="MF_00017"/>
    </source>
</evidence>
<sequence>MDFYPVAIEKLIEEFAKLPGIGRKTAQRLTLHVLNLPADEVREFAKALVKARGTIKYCSICGNFTDSDPCAICSNPNRDKSIICVIEEPKDIMSMERIKEYNGVYHVLHGNISPMAGRGPEDIKLRELIRRINGDVNEVIVATNPNVEGEATAMYISKILKHLGVKVTRIAHGIPVGGNLEYADEVTLLKALEGRTEI</sequence>
<dbReference type="EMBL" id="AP009049">
    <property type="protein sequence ID" value="BAH08429.1"/>
    <property type="molecule type" value="Genomic_DNA"/>
</dbReference>
<dbReference type="RefSeq" id="WP_012104138.1">
    <property type="nucleotide sequence ID" value="NC_011837.1"/>
</dbReference>
<dbReference type="SMR" id="B9DXI6"/>
<dbReference type="KEGG" id="ckr:CKR_3378"/>
<dbReference type="HOGENOM" id="CLU_060739_1_0_9"/>
<dbReference type="Proteomes" id="UP000007969">
    <property type="component" value="Chromosome"/>
</dbReference>
<dbReference type="GO" id="GO:0003677">
    <property type="term" value="F:DNA binding"/>
    <property type="evidence" value="ECO:0007669"/>
    <property type="project" value="UniProtKB-UniRule"/>
</dbReference>
<dbReference type="GO" id="GO:0008270">
    <property type="term" value="F:zinc ion binding"/>
    <property type="evidence" value="ECO:0007669"/>
    <property type="project" value="UniProtKB-KW"/>
</dbReference>
<dbReference type="GO" id="GO:0006310">
    <property type="term" value="P:DNA recombination"/>
    <property type="evidence" value="ECO:0007669"/>
    <property type="project" value="UniProtKB-UniRule"/>
</dbReference>
<dbReference type="GO" id="GO:0006281">
    <property type="term" value="P:DNA repair"/>
    <property type="evidence" value="ECO:0007669"/>
    <property type="project" value="UniProtKB-UniRule"/>
</dbReference>
<dbReference type="CDD" id="cd01025">
    <property type="entry name" value="TOPRIM_recR"/>
    <property type="match status" value="1"/>
</dbReference>
<dbReference type="Gene3D" id="3.30.60.80">
    <property type="match status" value="1"/>
</dbReference>
<dbReference type="Gene3D" id="3.40.1360.10">
    <property type="match status" value="1"/>
</dbReference>
<dbReference type="Gene3D" id="6.10.250.240">
    <property type="match status" value="1"/>
</dbReference>
<dbReference type="Gene3D" id="1.10.8.420">
    <property type="entry name" value="RecR Domain 1"/>
    <property type="match status" value="1"/>
</dbReference>
<dbReference type="HAMAP" id="MF_00017">
    <property type="entry name" value="RecR"/>
    <property type="match status" value="1"/>
</dbReference>
<dbReference type="InterPro" id="IPR000093">
    <property type="entry name" value="DNA_Rcmb_RecR"/>
</dbReference>
<dbReference type="InterPro" id="IPR023627">
    <property type="entry name" value="Rcmb_RecR"/>
</dbReference>
<dbReference type="InterPro" id="IPR015967">
    <property type="entry name" value="Rcmb_RecR_Znf"/>
</dbReference>
<dbReference type="InterPro" id="IPR006171">
    <property type="entry name" value="TOPRIM_dom"/>
</dbReference>
<dbReference type="InterPro" id="IPR034137">
    <property type="entry name" value="TOPRIM_RecR"/>
</dbReference>
<dbReference type="NCBIfam" id="TIGR00615">
    <property type="entry name" value="recR"/>
    <property type="match status" value="1"/>
</dbReference>
<dbReference type="PANTHER" id="PTHR30446">
    <property type="entry name" value="RECOMBINATION PROTEIN RECR"/>
    <property type="match status" value="1"/>
</dbReference>
<dbReference type="PANTHER" id="PTHR30446:SF0">
    <property type="entry name" value="RECOMBINATION PROTEIN RECR"/>
    <property type="match status" value="1"/>
</dbReference>
<dbReference type="Pfam" id="PF21175">
    <property type="entry name" value="RecR_C"/>
    <property type="match status" value="1"/>
</dbReference>
<dbReference type="Pfam" id="PF21176">
    <property type="entry name" value="RecR_HhH"/>
    <property type="match status" value="1"/>
</dbReference>
<dbReference type="Pfam" id="PF02132">
    <property type="entry name" value="RecR_ZnF"/>
    <property type="match status" value="1"/>
</dbReference>
<dbReference type="Pfam" id="PF13662">
    <property type="entry name" value="Toprim_4"/>
    <property type="match status" value="1"/>
</dbReference>
<dbReference type="SMART" id="SM00493">
    <property type="entry name" value="TOPRIM"/>
    <property type="match status" value="1"/>
</dbReference>
<dbReference type="SUPFAM" id="SSF111304">
    <property type="entry name" value="Recombination protein RecR"/>
    <property type="match status" value="1"/>
</dbReference>
<dbReference type="PROSITE" id="PS01300">
    <property type="entry name" value="RECR"/>
    <property type="match status" value="1"/>
</dbReference>
<dbReference type="PROSITE" id="PS50880">
    <property type="entry name" value="TOPRIM"/>
    <property type="match status" value="1"/>
</dbReference>
<gene>
    <name evidence="1" type="primary">recR</name>
    <name type="ordered locus">CKR_3378</name>
</gene>